<protein>
    <recommendedName>
        <fullName evidence="1">UDP-3-O-acylglucosamine N-acyltransferase</fullName>
        <ecNumber evidence="1">2.3.1.191</ecNumber>
    </recommendedName>
</protein>
<accession>B3PBQ8</accession>
<organism>
    <name type="scientific">Cellvibrio japonicus (strain Ueda107)</name>
    <name type="common">Pseudomonas fluorescens subsp. cellulosa</name>
    <dbReference type="NCBI Taxonomy" id="498211"/>
    <lineage>
        <taxon>Bacteria</taxon>
        <taxon>Pseudomonadati</taxon>
        <taxon>Pseudomonadota</taxon>
        <taxon>Gammaproteobacteria</taxon>
        <taxon>Cellvibrionales</taxon>
        <taxon>Cellvibrionaceae</taxon>
        <taxon>Cellvibrio</taxon>
    </lineage>
</organism>
<proteinExistence type="inferred from homology"/>
<keyword id="KW-0012">Acyltransferase</keyword>
<keyword id="KW-0441">Lipid A biosynthesis</keyword>
<keyword id="KW-0444">Lipid biosynthesis</keyword>
<keyword id="KW-0443">Lipid metabolism</keyword>
<keyword id="KW-1185">Reference proteome</keyword>
<keyword id="KW-0677">Repeat</keyword>
<keyword id="KW-0808">Transferase</keyword>
<comment type="function">
    <text evidence="1">Catalyzes the N-acylation of UDP-3-O-acylglucosamine using 3-hydroxyacyl-ACP as the acyl donor. Is involved in the biosynthesis of lipid A, a phosphorylated glycolipid that anchors the lipopolysaccharide to the outer membrane of the cell.</text>
</comment>
<comment type="catalytic activity">
    <reaction evidence="1">
        <text>a UDP-3-O-[(3R)-3-hydroxyacyl]-alpha-D-glucosamine + a (3R)-hydroxyacyl-[ACP] = a UDP-2-N,3-O-bis[(3R)-3-hydroxyacyl]-alpha-D-glucosamine + holo-[ACP] + H(+)</text>
        <dbReference type="Rhea" id="RHEA:53836"/>
        <dbReference type="Rhea" id="RHEA-COMP:9685"/>
        <dbReference type="Rhea" id="RHEA-COMP:9945"/>
        <dbReference type="ChEBI" id="CHEBI:15378"/>
        <dbReference type="ChEBI" id="CHEBI:64479"/>
        <dbReference type="ChEBI" id="CHEBI:78827"/>
        <dbReference type="ChEBI" id="CHEBI:137740"/>
        <dbReference type="ChEBI" id="CHEBI:137748"/>
        <dbReference type="EC" id="2.3.1.191"/>
    </reaction>
</comment>
<comment type="pathway">
    <text evidence="1">Bacterial outer membrane biogenesis; LPS lipid A biosynthesis.</text>
</comment>
<comment type="subunit">
    <text evidence="1">Homotrimer.</text>
</comment>
<comment type="similarity">
    <text evidence="1">Belongs to the transferase hexapeptide repeat family. LpxD subfamily.</text>
</comment>
<evidence type="ECO:0000255" key="1">
    <source>
        <dbReference type="HAMAP-Rule" id="MF_00523"/>
    </source>
</evidence>
<name>LPXD_CELJU</name>
<gene>
    <name evidence="1" type="primary">lpxD</name>
    <name type="ordered locus">CJA_1122</name>
</gene>
<dbReference type="EC" id="2.3.1.191" evidence="1"/>
<dbReference type="EMBL" id="CP000934">
    <property type="protein sequence ID" value="ACE84102.1"/>
    <property type="molecule type" value="Genomic_DNA"/>
</dbReference>
<dbReference type="RefSeq" id="WP_012486770.1">
    <property type="nucleotide sequence ID" value="NC_010995.1"/>
</dbReference>
<dbReference type="SMR" id="B3PBQ8"/>
<dbReference type="STRING" id="498211.CJA_1122"/>
<dbReference type="KEGG" id="cja:CJA_1122"/>
<dbReference type="eggNOG" id="COG1044">
    <property type="taxonomic scope" value="Bacteria"/>
</dbReference>
<dbReference type="HOGENOM" id="CLU_049865_0_0_6"/>
<dbReference type="OrthoDB" id="9784739at2"/>
<dbReference type="UniPathway" id="UPA00973"/>
<dbReference type="Proteomes" id="UP000001036">
    <property type="component" value="Chromosome"/>
</dbReference>
<dbReference type="GO" id="GO:0016020">
    <property type="term" value="C:membrane"/>
    <property type="evidence" value="ECO:0007669"/>
    <property type="project" value="GOC"/>
</dbReference>
<dbReference type="GO" id="GO:0016410">
    <property type="term" value="F:N-acyltransferase activity"/>
    <property type="evidence" value="ECO:0007669"/>
    <property type="project" value="InterPro"/>
</dbReference>
<dbReference type="GO" id="GO:0009245">
    <property type="term" value="P:lipid A biosynthetic process"/>
    <property type="evidence" value="ECO:0007669"/>
    <property type="project" value="UniProtKB-UniRule"/>
</dbReference>
<dbReference type="CDD" id="cd03352">
    <property type="entry name" value="LbH_LpxD"/>
    <property type="match status" value="1"/>
</dbReference>
<dbReference type="Gene3D" id="1.20.5.170">
    <property type="match status" value="1"/>
</dbReference>
<dbReference type="Gene3D" id="2.160.10.10">
    <property type="entry name" value="Hexapeptide repeat proteins"/>
    <property type="match status" value="1"/>
</dbReference>
<dbReference type="Gene3D" id="3.40.1390.10">
    <property type="entry name" value="MurE/MurF, N-terminal domain"/>
    <property type="match status" value="1"/>
</dbReference>
<dbReference type="HAMAP" id="MF_00523">
    <property type="entry name" value="LpxD"/>
    <property type="match status" value="1"/>
</dbReference>
<dbReference type="InterPro" id="IPR001451">
    <property type="entry name" value="Hexapep"/>
</dbReference>
<dbReference type="InterPro" id="IPR018357">
    <property type="entry name" value="Hexapep_transf_CS"/>
</dbReference>
<dbReference type="InterPro" id="IPR007691">
    <property type="entry name" value="LpxD"/>
</dbReference>
<dbReference type="InterPro" id="IPR011004">
    <property type="entry name" value="Trimer_LpxA-like_sf"/>
</dbReference>
<dbReference type="InterPro" id="IPR020573">
    <property type="entry name" value="UDP_GlcNAc_AcTrfase_non-rep"/>
</dbReference>
<dbReference type="NCBIfam" id="TIGR01853">
    <property type="entry name" value="lipid_A_lpxD"/>
    <property type="match status" value="1"/>
</dbReference>
<dbReference type="NCBIfam" id="NF002060">
    <property type="entry name" value="PRK00892.1"/>
    <property type="match status" value="1"/>
</dbReference>
<dbReference type="PANTHER" id="PTHR43378">
    <property type="entry name" value="UDP-3-O-ACYLGLUCOSAMINE N-ACYLTRANSFERASE"/>
    <property type="match status" value="1"/>
</dbReference>
<dbReference type="PANTHER" id="PTHR43378:SF2">
    <property type="entry name" value="UDP-3-O-ACYLGLUCOSAMINE N-ACYLTRANSFERASE 1, MITOCHONDRIAL-RELATED"/>
    <property type="match status" value="1"/>
</dbReference>
<dbReference type="Pfam" id="PF00132">
    <property type="entry name" value="Hexapep"/>
    <property type="match status" value="1"/>
</dbReference>
<dbReference type="Pfam" id="PF14602">
    <property type="entry name" value="Hexapep_2"/>
    <property type="match status" value="1"/>
</dbReference>
<dbReference type="Pfam" id="PF04613">
    <property type="entry name" value="LpxD"/>
    <property type="match status" value="1"/>
</dbReference>
<dbReference type="SUPFAM" id="SSF51161">
    <property type="entry name" value="Trimeric LpxA-like enzymes"/>
    <property type="match status" value="1"/>
</dbReference>
<dbReference type="PROSITE" id="PS00101">
    <property type="entry name" value="HEXAPEP_TRANSFERASES"/>
    <property type="match status" value="1"/>
</dbReference>
<feature type="chain" id="PRO_1000211746" description="UDP-3-O-acylglucosamine N-acyltransferase">
    <location>
        <begin position="1"/>
        <end position="341"/>
    </location>
</feature>
<feature type="active site" description="Proton acceptor" evidence="1">
    <location>
        <position position="240"/>
    </location>
</feature>
<sequence>MKRSYSLAELARYLDAELKGDPDYEIRALATLQSASAHQLGFIANPVYQKYLATTQAGALLLRPDFSEYYSGHQLLVANPYQAYAHVSALFDPSVEFSPGIHPTAVIGDGCHLGHGVSIAAHVVLGANVSLGDGAALGPGTVIGDDCHIGARTRLAANVTLYQGVSLGDDCILHAGCVLGADGFGFAPSAGGWIKIHQLGSVVVGNRVEIGASTCIDRGALDDTRIEDGVIIDNLVQIAHNVRIGKNTAIAGHTAIAGSTQIGANCTIAGAVGIVGHLHITDGVHITAMTLVTHSIDKPGSYSSGTPMSQTREWRKNAARFRQLDGLANRLIKIERDQSAE</sequence>
<reference key="1">
    <citation type="journal article" date="2008" name="J. Bacteriol.">
        <title>Insights into plant cell wall degradation from the genome sequence of the soil bacterium Cellvibrio japonicus.</title>
        <authorList>
            <person name="DeBoy R.T."/>
            <person name="Mongodin E.F."/>
            <person name="Fouts D.E."/>
            <person name="Tailford L.E."/>
            <person name="Khouri H."/>
            <person name="Emerson J.B."/>
            <person name="Mohamoud Y."/>
            <person name="Watkins K."/>
            <person name="Henrissat B."/>
            <person name="Gilbert H.J."/>
            <person name="Nelson K.E."/>
        </authorList>
    </citation>
    <scope>NUCLEOTIDE SEQUENCE [LARGE SCALE GENOMIC DNA]</scope>
    <source>
        <strain>Ueda107</strain>
    </source>
</reference>